<accession>Q63PH9</accession>
<feature type="chain" id="PRO_0000073259" description="ATP synthase gamma chain">
    <location>
        <begin position="1"/>
        <end position="291"/>
    </location>
</feature>
<protein>
    <recommendedName>
        <fullName evidence="1">ATP synthase gamma chain</fullName>
    </recommendedName>
    <alternativeName>
        <fullName evidence="1">ATP synthase F1 sector gamma subunit</fullName>
    </alternativeName>
    <alternativeName>
        <fullName evidence="1">F-ATPase gamma subunit</fullName>
    </alternativeName>
</protein>
<evidence type="ECO:0000255" key="1">
    <source>
        <dbReference type="HAMAP-Rule" id="MF_00815"/>
    </source>
</evidence>
<gene>
    <name evidence="1" type="primary">atpG</name>
    <name type="ordered locus">BPSL3397</name>
</gene>
<sequence>MAGMKEIRGKIKSVQNTRKITKAMEMVAASKMRRAQERMRAARPYAEKVRAIAAHMSRANPEYRHPFMVANDGVKTAGMILVTTDKGLCGGLNTNVLRASLQKFKELEEQGQKVEATAIGGKGLGFLNRFGAKVISQVVHLGDTPHLDKLIGAVKTQLDLYSEGKLSAVYLAYTRFVNTMKQETVIEQLLPLSSEHFDANDGTPATSWDYIYEPDAQAVVDELLVRYVEALVYQAVAENMASEQSARMVAMKAASDNAKTVISELQLSYNKSRQAAITKELSEIVGGAAAV</sequence>
<proteinExistence type="inferred from homology"/>
<dbReference type="EMBL" id="BX571965">
    <property type="protein sequence ID" value="CAH37409.1"/>
    <property type="molecule type" value="Genomic_DNA"/>
</dbReference>
<dbReference type="RefSeq" id="WP_004195831.1">
    <property type="nucleotide sequence ID" value="NZ_CP009538.1"/>
</dbReference>
<dbReference type="RefSeq" id="YP_109990.1">
    <property type="nucleotide sequence ID" value="NC_006350.1"/>
</dbReference>
<dbReference type="SMR" id="Q63PH9"/>
<dbReference type="STRING" id="272560.BPSL3397"/>
<dbReference type="GeneID" id="92980625"/>
<dbReference type="KEGG" id="bps:BPSL3397"/>
<dbReference type="PATRIC" id="fig|272560.51.peg.1793"/>
<dbReference type="eggNOG" id="COG0224">
    <property type="taxonomic scope" value="Bacteria"/>
</dbReference>
<dbReference type="Proteomes" id="UP000000605">
    <property type="component" value="Chromosome 1"/>
</dbReference>
<dbReference type="GO" id="GO:0005886">
    <property type="term" value="C:plasma membrane"/>
    <property type="evidence" value="ECO:0007669"/>
    <property type="project" value="UniProtKB-SubCell"/>
</dbReference>
<dbReference type="GO" id="GO:0045259">
    <property type="term" value="C:proton-transporting ATP synthase complex"/>
    <property type="evidence" value="ECO:0007669"/>
    <property type="project" value="UniProtKB-KW"/>
</dbReference>
<dbReference type="GO" id="GO:0005524">
    <property type="term" value="F:ATP binding"/>
    <property type="evidence" value="ECO:0007669"/>
    <property type="project" value="UniProtKB-UniRule"/>
</dbReference>
<dbReference type="GO" id="GO:0046933">
    <property type="term" value="F:proton-transporting ATP synthase activity, rotational mechanism"/>
    <property type="evidence" value="ECO:0007669"/>
    <property type="project" value="UniProtKB-UniRule"/>
</dbReference>
<dbReference type="GO" id="GO:0042777">
    <property type="term" value="P:proton motive force-driven plasma membrane ATP synthesis"/>
    <property type="evidence" value="ECO:0007669"/>
    <property type="project" value="UniProtKB-UniRule"/>
</dbReference>
<dbReference type="CDD" id="cd12151">
    <property type="entry name" value="F1-ATPase_gamma"/>
    <property type="match status" value="1"/>
</dbReference>
<dbReference type="FunFam" id="1.10.287.80:FF:000005">
    <property type="entry name" value="ATP synthase gamma chain"/>
    <property type="match status" value="1"/>
</dbReference>
<dbReference type="Gene3D" id="3.40.1380.10">
    <property type="match status" value="1"/>
</dbReference>
<dbReference type="Gene3D" id="1.10.287.80">
    <property type="entry name" value="ATP synthase, gamma subunit, helix hairpin domain"/>
    <property type="match status" value="1"/>
</dbReference>
<dbReference type="HAMAP" id="MF_00815">
    <property type="entry name" value="ATP_synth_gamma_bact"/>
    <property type="match status" value="1"/>
</dbReference>
<dbReference type="InterPro" id="IPR035968">
    <property type="entry name" value="ATP_synth_F1_ATPase_gsu"/>
</dbReference>
<dbReference type="InterPro" id="IPR000131">
    <property type="entry name" value="ATP_synth_F1_gsu"/>
</dbReference>
<dbReference type="InterPro" id="IPR023632">
    <property type="entry name" value="ATP_synth_F1_gsu_CS"/>
</dbReference>
<dbReference type="NCBIfam" id="TIGR01146">
    <property type="entry name" value="ATPsyn_F1gamma"/>
    <property type="match status" value="1"/>
</dbReference>
<dbReference type="NCBIfam" id="NF004144">
    <property type="entry name" value="PRK05621.1-1"/>
    <property type="match status" value="1"/>
</dbReference>
<dbReference type="PANTHER" id="PTHR11693">
    <property type="entry name" value="ATP SYNTHASE GAMMA CHAIN"/>
    <property type="match status" value="1"/>
</dbReference>
<dbReference type="PANTHER" id="PTHR11693:SF22">
    <property type="entry name" value="ATP SYNTHASE SUBUNIT GAMMA, MITOCHONDRIAL"/>
    <property type="match status" value="1"/>
</dbReference>
<dbReference type="Pfam" id="PF00231">
    <property type="entry name" value="ATP-synt"/>
    <property type="match status" value="1"/>
</dbReference>
<dbReference type="PRINTS" id="PR00126">
    <property type="entry name" value="ATPASEGAMMA"/>
</dbReference>
<dbReference type="SUPFAM" id="SSF52943">
    <property type="entry name" value="ATP synthase (F1-ATPase), gamma subunit"/>
    <property type="match status" value="1"/>
</dbReference>
<dbReference type="PROSITE" id="PS00153">
    <property type="entry name" value="ATPASE_GAMMA"/>
    <property type="match status" value="1"/>
</dbReference>
<keyword id="KW-0066">ATP synthesis</keyword>
<keyword id="KW-0997">Cell inner membrane</keyword>
<keyword id="KW-1003">Cell membrane</keyword>
<keyword id="KW-0139">CF(1)</keyword>
<keyword id="KW-0375">Hydrogen ion transport</keyword>
<keyword id="KW-0406">Ion transport</keyword>
<keyword id="KW-0472">Membrane</keyword>
<keyword id="KW-1185">Reference proteome</keyword>
<keyword id="KW-0813">Transport</keyword>
<reference key="1">
    <citation type="journal article" date="2004" name="Proc. Natl. Acad. Sci. U.S.A.">
        <title>Genomic plasticity of the causative agent of melioidosis, Burkholderia pseudomallei.</title>
        <authorList>
            <person name="Holden M.T.G."/>
            <person name="Titball R.W."/>
            <person name="Peacock S.J."/>
            <person name="Cerdeno-Tarraga A.-M."/>
            <person name="Atkins T."/>
            <person name="Crossman L.C."/>
            <person name="Pitt T."/>
            <person name="Churcher C."/>
            <person name="Mungall K.L."/>
            <person name="Bentley S.D."/>
            <person name="Sebaihia M."/>
            <person name="Thomson N.R."/>
            <person name="Bason N."/>
            <person name="Beacham I.R."/>
            <person name="Brooks K."/>
            <person name="Brown K.A."/>
            <person name="Brown N.F."/>
            <person name="Challis G.L."/>
            <person name="Cherevach I."/>
            <person name="Chillingworth T."/>
            <person name="Cronin A."/>
            <person name="Crossett B."/>
            <person name="Davis P."/>
            <person name="DeShazer D."/>
            <person name="Feltwell T."/>
            <person name="Fraser A."/>
            <person name="Hance Z."/>
            <person name="Hauser H."/>
            <person name="Holroyd S."/>
            <person name="Jagels K."/>
            <person name="Keith K.E."/>
            <person name="Maddison M."/>
            <person name="Moule S."/>
            <person name="Price C."/>
            <person name="Quail M.A."/>
            <person name="Rabbinowitsch E."/>
            <person name="Rutherford K."/>
            <person name="Sanders M."/>
            <person name="Simmonds M."/>
            <person name="Songsivilai S."/>
            <person name="Stevens K."/>
            <person name="Tumapa S."/>
            <person name="Vesaratchavest M."/>
            <person name="Whitehead S."/>
            <person name="Yeats C."/>
            <person name="Barrell B.G."/>
            <person name="Oyston P.C.F."/>
            <person name="Parkhill J."/>
        </authorList>
    </citation>
    <scope>NUCLEOTIDE SEQUENCE [LARGE SCALE GENOMIC DNA]</scope>
    <source>
        <strain>K96243</strain>
    </source>
</reference>
<organism>
    <name type="scientific">Burkholderia pseudomallei (strain K96243)</name>
    <dbReference type="NCBI Taxonomy" id="272560"/>
    <lineage>
        <taxon>Bacteria</taxon>
        <taxon>Pseudomonadati</taxon>
        <taxon>Pseudomonadota</taxon>
        <taxon>Betaproteobacteria</taxon>
        <taxon>Burkholderiales</taxon>
        <taxon>Burkholderiaceae</taxon>
        <taxon>Burkholderia</taxon>
        <taxon>pseudomallei group</taxon>
    </lineage>
</organism>
<comment type="function">
    <text evidence="1">Produces ATP from ADP in the presence of a proton gradient across the membrane. The gamma chain is believed to be important in regulating ATPase activity and the flow of protons through the CF(0) complex.</text>
</comment>
<comment type="subunit">
    <text evidence="1">F-type ATPases have 2 components, CF(1) - the catalytic core - and CF(0) - the membrane proton channel. CF(1) has five subunits: alpha(3), beta(3), gamma(1), delta(1), epsilon(1). CF(0) has three main subunits: a, b and c.</text>
</comment>
<comment type="subcellular location">
    <subcellularLocation>
        <location evidence="1">Cell inner membrane</location>
        <topology evidence="1">Peripheral membrane protein</topology>
    </subcellularLocation>
</comment>
<comment type="similarity">
    <text evidence="1">Belongs to the ATPase gamma chain family.</text>
</comment>
<name>ATPG_BURPS</name>